<organism>
    <name type="scientific">Brucella abortus biovar 1 (strain 9-941)</name>
    <dbReference type="NCBI Taxonomy" id="262698"/>
    <lineage>
        <taxon>Bacteria</taxon>
        <taxon>Pseudomonadati</taxon>
        <taxon>Pseudomonadota</taxon>
        <taxon>Alphaproteobacteria</taxon>
        <taxon>Hyphomicrobiales</taxon>
        <taxon>Brucellaceae</taxon>
        <taxon>Brucella/Ochrobactrum group</taxon>
        <taxon>Brucella</taxon>
    </lineage>
</organism>
<sequence>MMESGEALLKKLDGRLSGLRGRLTPDTGMDKITWFRAGGPAQVLFQPSDEEDLSAFLKAVPEEIPLLVVGIGSNLLVRDGGVPGFVVRLSAKGFGEVEQVCDTQLRAGAAAPDKRVAAAALEAGLAGFHFYHGIPGGIGGALRMNAGANGVETRERVVEVRALDRKGEVHVLSNADMGYAYRHSSASPDLIFTSVLFEGVPGERDDIRRAMDEVQHHRETVQPVREKTGGSTFKNSEGTSAWKEIDKAGCRGLRVGGAQMSEMHCNFMINTGNATGHDLETLGETVRARVFENSGIRLHWEIKRLGLFREGEQIEEFLGKIV</sequence>
<proteinExistence type="inferred from homology"/>
<evidence type="ECO:0000255" key="1">
    <source>
        <dbReference type="HAMAP-Rule" id="MF_00037"/>
    </source>
</evidence>
<feature type="chain" id="PRO_0000224669" description="UDP-N-acetylenolpyruvoylglucosamine reductase">
    <location>
        <begin position="1"/>
        <end position="322"/>
    </location>
</feature>
<feature type="domain" description="FAD-binding PCMH-type" evidence="1">
    <location>
        <begin position="36"/>
        <end position="202"/>
    </location>
</feature>
<feature type="active site" evidence="1">
    <location>
        <position position="182"/>
    </location>
</feature>
<feature type="active site" description="Proton donor" evidence="1">
    <location>
        <position position="231"/>
    </location>
</feature>
<feature type="active site" evidence="1">
    <location>
        <position position="301"/>
    </location>
</feature>
<protein>
    <recommendedName>
        <fullName evidence="1">UDP-N-acetylenolpyruvoylglucosamine reductase</fullName>
        <ecNumber evidence="1">1.3.1.98</ecNumber>
    </recommendedName>
    <alternativeName>
        <fullName evidence="1">UDP-N-acetylmuramate dehydrogenase</fullName>
    </alternativeName>
</protein>
<reference key="1">
    <citation type="journal article" date="2005" name="J. Bacteriol.">
        <title>Completion of the genome sequence of Brucella abortus and comparison to the highly similar genomes of Brucella melitensis and Brucella suis.</title>
        <authorList>
            <person name="Halling S.M."/>
            <person name="Peterson-Burch B.D."/>
            <person name="Bricker B.J."/>
            <person name="Zuerner R.L."/>
            <person name="Qing Z."/>
            <person name="Li L.-L."/>
            <person name="Kapur V."/>
            <person name="Alt D.P."/>
            <person name="Olsen S.C."/>
        </authorList>
    </citation>
    <scope>NUCLEOTIDE SEQUENCE [LARGE SCALE GENOMIC DNA]</scope>
    <source>
        <strain>9-941</strain>
    </source>
</reference>
<keyword id="KW-0131">Cell cycle</keyword>
<keyword id="KW-0132">Cell division</keyword>
<keyword id="KW-0133">Cell shape</keyword>
<keyword id="KW-0961">Cell wall biogenesis/degradation</keyword>
<keyword id="KW-0963">Cytoplasm</keyword>
<keyword id="KW-0274">FAD</keyword>
<keyword id="KW-0285">Flavoprotein</keyword>
<keyword id="KW-0521">NADP</keyword>
<keyword id="KW-0560">Oxidoreductase</keyword>
<keyword id="KW-0573">Peptidoglycan synthesis</keyword>
<accession>Q57C80</accession>
<comment type="function">
    <text evidence="1">Cell wall formation.</text>
</comment>
<comment type="catalytic activity">
    <reaction evidence="1">
        <text>UDP-N-acetyl-alpha-D-muramate + NADP(+) = UDP-N-acetyl-3-O-(1-carboxyvinyl)-alpha-D-glucosamine + NADPH + H(+)</text>
        <dbReference type="Rhea" id="RHEA:12248"/>
        <dbReference type="ChEBI" id="CHEBI:15378"/>
        <dbReference type="ChEBI" id="CHEBI:57783"/>
        <dbReference type="ChEBI" id="CHEBI:58349"/>
        <dbReference type="ChEBI" id="CHEBI:68483"/>
        <dbReference type="ChEBI" id="CHEBI:70757"/>
        <dbReference type="EC" id="1.3.1.98"/>
    </reaction>
</comment>
<comment type="cofactor">
    <cofactor evidence="1">
        <name>FAD</name>
        <dbReference type="ChEBI" id="CHEBI:57692"/>
    </cofactor>
</comment>
<comment type="pathway">
    <text evidence="1">Cell wall biogenesis; peptidoglycan biosynthesis.</text>
</comment>
<comment type="subcellular location">
    <subcellularLocation>
        <location evidence="1">Cytoplasm</location>
    </subcellularLocation>
</comment>
<comment type="similarity">
    <text evidence="1">Belongs to the MurB family.</text>
</comment>
<name>MURB_BRUAB</name>
<dbReference type="EC" id="1.3.1.98" evidence="1"/>
<dbReference type="EMBL" id="AE017223">
    <property type="protein sequence ID" value="AAX74754.1"/>
    <property type="molecule type" value="Genomic_DNA"/>
</dbReference>
<dbReference type="RefSeq" id="WP_002966892.1">
    <property type="nucleotide sequence ID" value="NC_006932.1"/>
</dbReference>
<dbReference type="SMR" id="Q57C80"/>
<dbReference type="EnsemblBacteria" id="AAX74754">
    <property type="protein sequence ID" value="AAX74754"/>
    <property type="gene ID" value="BruAb1_1424"/>
</dbReference>
<dbReference type="GeneID" id="93016273"/>
<dbReference type="KEGG" id="bmb:BruAb1_1424"/>
<dbReference type="HOGENOM" id="CLU_035304_1_0_5"/>
<dbReference type="UniPathway" id="UPA00219"/>
<dbReference type="Proteomes" id="UP000000540">
    <property type="component" value="Chromosome I"/>
</dbReference>
<dbReference type="GO" id="GO:0005829">
    <property type="term" value="C:cytosol"/>
    <property type="evidence" value="ECO:0007669"/>
    <property type="project" value="TreeGrafter"/>
</dbReference>
<dbReference type="GO" id="GO:0071949">
    <property type="term" value="F:FAD binding"/>
    <property type="evidence" value="ECO:0007669"/>
    <property type="project" value="InterPro"/>
</dbReference>
<dbReference type="GO" id="GO:0008762">
    <property type="term" value="F:UDP-N-acetylmuramate dehydrogenase activity"/>
    <property type="evidence" value="ECO:0007669"/>
    <property type="project" value="UniProtKB-UniRule"/>
</dbReference>
<dbReference type="GO" id="GO:0051301">
    <property type="term" value="P:cell division"/>
    <property type="evidence" value="ECO:0007669"/>
    <property type="project" value="UniProtKB-KW"/>
</dbReference>
<dbReference type="GO" id="GO:0071555">
    <property type="term" value="P:cell wall organization"/>
    <property type="evidence" value="ECO:0007669"/>
    <property type="project" value="UniProtKB-KW"/>
</dbReference>
<dbReference type="GO" id="GO:0009252">
    <property type="term" value="P:peptidoglycan biosynthetic process"/>
    <property type="evidence" value="ECO:0007669"/>
    <property type="project" value="UniProtKB-UniRule"/>
</dbReference>
<dbReference type="GO" id="GO:0008360">
    <property type="term" value="P:regulation of cell shape"/>
    <property type="evidence" value="ECO:0007669"/>
    <property type="project" value="UniProtKB-KW"/>
</dbReference>
<dbReference type="Gene3D" id="3.30.465.10">
    <property type="match status" value="1"/>
</dbReference>
<dbReference type="Gene3D" id="3.90.78.10">
    <property type="entry name" value="UDP-N-acetylenolpyruvoylglucosamine reductase, C-terminal domain"/>
    <property type="match status" value="1"/>
</dbReference>
<dbReference type="Gene3D" id="3.30.43.10">
    <property type="entry name" value="Uridine Diphospho-n-acetylenolpyruvylglucosamine Reductase, domain 2"/>
    <property type="match status" value="1"/>
</dbReference>
<dbReference type="HAMAP" id="MF_00037">
    <property type="entry name" value="MurB"/>
    <property type="match status" value="1"/>
</dbReference>
<dbReference type="InterPro" id="IPR016166">
    <property type="entry name" value="FAD-bd_PCMH"/>
</dbReference>
<dbReference type="InterPro" id="IPR036318">
    <property type="entry name" value="FAD-bd_PCMH-like_sf"/>
</dbReference>
<dbReference type="InterPro" id="IPR016167">
    <property type="entry name" value="FAD-bd_PCMH_sub1"/>
</dbReference>
<dbReference type="InterPro" id="IPR016169">
    <property type="entry name" value="FAD-bd_PCMH_sub2"/>
</dbReference>
<dbReference type="InterPro" id="IPR003170">
    <property type="entry name" value="MurB"/>
</dbReference>
<dbReference type="InterPro" id="IPR011601">
    <property type="entry name" value="MurB_C"/>
</dbReference>
<dbReference type="InterPro" id="IPR036635">
    <property type="entry name" value="MurB_C_sf"/>
</dbReference>
<dbReference type="InterPro" id="IPR006094">
    <property type="entry name" value="Oxid_FAD_bind_N"/>
</dbReference>
<dbReference type="NCBIfam" id="TIGR00179">
    <property type="entry name" value="murB"/>
    <property type="match status" value="1"/>
</dbReference>
<dbReference type="NCBIfam" id="NF010480">
    <property type="entry name" value="PRK13905.1"/>
    <property type="match status" value="1"/>
</dbReference>
<dbReference type="PANTHER" id="PTHR21071">
    <property type="entry name" value="UDP-N-ACETYLENOLPYRUVOYLGLUCOSAMINE REDUCTASE"/>
    <property type="match status" value="1"/>
</dbReference>
<dbReference type="PANTHER" id="PTHR21071:SF4">
    <property type="entry name" value="UDP-N-ACETYLENOLPYRUVOYLGLUCOSAMINE REDUCTASE"/>
    <property type="match status" value="1"/>
</dbReference>
<dbReference type="Pfam" id="PF01565">
    <property type="entry name" value="FAD_binding_4"/>
    <property type="match status" value="1"/>
</dbReference>
<dbReference type="Pfam" id="PF02873">
    <property type="entry name" value="MurB_C"/>
    <property type="match status" value="1"/>
</dbReference>
<dbReference type="SUPFAM" id="SSF56176">
    <property type="entry name" value="FAD-binding/transporter-associated domain-like"/>
    <property type="match status" value="1"/>
</dbReference>
<dbReference type="SUPFAM" id="SSF56194">
    <property type="entry name" value="Uridine diphospho-N-Acetylenolpyruvylglucosamine reductase, MurB, C-terminal domain"/>
    <property type="match status" value="1"/>
</dbReference>
<dbReference type="PROSITE" id="PS51387">
    <property type="entry name" value="FAD_PCMH"/>
    <property type="match status" value="1"/>
</dbReference>
<gene>
    <name evidence="1" type="primary">murB</name>
    <name type="ordered locus">BruAb1_1424</name>
</gene>